<evidence type="ECO:0000255" key="1">
    <source>
        <dbReference type="HAMAP-Rule" id="MF_00272"/>
    </source>
</evidence>
<evidence type="ECO:0000255" key="2">
    <source>
        <dbReference type="PROSITE-ProRule" id="PRU01066"/>
    </source>
</evidence>
<feature type="chain" id="PRO_1000059187" description="Glycine cleavage system H protein">
    <location>
        <begin position="1"/>
        <end position="129"/>
    </location>
</feature>
<feature type="domain" description="Lipoyl-binding" evidence="2">
    <location>
        <begin position="24"/>
        <end position="106"/>
    </location>
</feature>
<feature type="modified residue" description="N6-lipoyllysine" evidence="1">
    <location>
        <position position="65"/>
    </location>
</feature>
<protein>
    <recommendedName>
        <fullName evidence="1">Glycine cleavage system H protein</fullName>
    </recommendedName>
</protein>
<gene>
    <name evidence="1" type="primary">gcvH</name>
    <name type="ordered locus">P9215_19421</name>
</gene>
<sequence>MSYKFPDNLNYADTHEYVLEEKGLLKIGVSEFAIDQLGDIVFVELADQGSTLEKGETFGTIESVKAVEEVYLPFSGEIVSVNENVVDNPELLQNDPIGEGWLVILKPKTKVSISDLMTSEEYQSKVVPK</sequence>
<name>GCSH_PROM2</name>
<organism>
    <name type="scientific">Prochlorococcus marinus (strain MIT 9215)</name>
    <dbReference type="NCBI Taxonomy" id="93060"/>
    <lineage>
        <taxon>Bacteria</taxon>
        <taxon>Bacillati</taxon>
        <taxon>Cyanobacteriota</taxon>
        <taxon>Cyanophyceae</taxon>
        <taxon>Synechococcales</taxon>
        <taxon>Prochlorococcaceae</taxon>
        <taxon>Prochlorococcus</taxon>
    </lineage>
</organism>
<reference key="1">
    <citation type="journal article" date="2007" name="PLoS Genet.">
        <title>Patterns and implications of gene gain and loss in the evolution of Prochlorococcus.</title>
        <authorList>
            <person name="Kettler G.C."/>
            <person name="Martiny A.C."/>
            <person name="Huang K."/>
            <person name="Zucker J."/>
            <person name="Coleman M.L."/>
            <person name="Rodrigue S."/>
            <person name="Chen F."/>
            <person name="Lapidus A."/>
            <person name="Ferriera S."/>
            <person name="Johnson J."/>
            <person name="Steglich C."/>
            <person name="Church G.M."/>
            <person name="Richardson P."/>
            <person name="Chisholm S.W."/>
        </authorList>
    </citation>
    <scope>NUCLEOTIDE SEQUENCE [LARGE SCALE GENOMIC DNA]</scope>
    <source>
        <strain>MIT 9215</strain>
    </source>
</reference>
<accession>A8G7H4</accession>
<comment type="function">
    <text evidence="1">The glycine cleavage system catalyzes the degradation of glycine. The H protein shuttles the methylamine group of glycine from the P protein to the T protein.</text>
</comment>
<comment type="cofactor">
    <cofactor evidence="1">
        <name>(R)-lipoate</name>
        <dbReference type="ChEBI" id="CHEBI:83088"/>
    </cofactor>
    <text evidence="1">Binds 1 lipoyl cofactor covalently.</text>
</comment>
<comment type="subunit">
    <text evidence="1">The glycine cleavage system is composed of four proteins: P, T, L and H.</text>
</comment>
<comment type="similarity">
    <text evidence="1">Belongs to the GcvH family.</text>
</comment>
<proteinExistence type="inferred from homology"/>
<dbReference type="EMBL" id="CP000825">
    <property type="protein sequence ID" value="ABV51555.1"/>
    <property type="molecule type" value="Genomic_DNA"/>
</dbReference>
<dbReference type="RefSeq" id="WP_012008543.1">
    <property type="nucleotide sequence ID" value="NC_009840.1"/>
</dbReference>
<dbReference type="SMR" id="A8G7H4"/>
<dbReference type="STRING" id="93060.P9215_19421"/>
<dbReference type="KEGG" id="pmh:P9215_19421"/>
<dbReference type="eggNOG" id="COG0509">
    <property type="taxonomic scope" value="Bacteria"/>
</dbReference>
<dbReference type="HOGENOM" id="CLU_097408_2_2_3"/>
<dbReference type="OrthoDB" id="9796712at2"/>
<dbReference type="Proteomes" id="UP000002014">
    <property type="component" value="Chromosome"/>
</dbReference>
<dbReference type="GO" id="GO:0005829">
    <property type="term" value="C:cytosol"/>
    <property type="evidence" value="ECO:0007669"/>
    <property type="project" value="TreeGrafter"/>
</dbReference>
<dbReference type="GO" id="GO:0005960">
    <property type="term" value="C:glycine cleavage complex"/>
    <property type="evidence" value="ECO:0007669"/>
    <property type="project" value="InterPro"/>
</dbReference>
<dbReference type="GO" id="GO:0019464">
    <property type="term" value="P:glycine decarboxylation via glycine cleavage system"/>
    <property type="evidence" value="ECO:0007669"/>
    <property type="project" value="UniProtKB-UniRule"/>
</dbReference>
<dbReference type="CDD" id="cd06848">
    <property type="entry name" value="GCS_H"/>
    <property type="match status" value="1"/>
</dbReference>
<dbReference type="Gene3D" id="2.40.50.100">
    <property type="match status" value="1"/>
</dbReference>
<dbReference type="HAMAP" id="MF_00272">
    <property type="entry name" value="GcvH"/>
    <property type="match status" value="1"/>
</dbReference>
<dbReference type="InterPro" id="IPR003016">
    <property type="entry name" value="2-oxoA_DH_lipoyl-BS"/>
</dbReference>
<dbReference type="InterPro" id="IPR000089">
    <property type="entry name" value="Biotin_lipoyl"/>
</dbReference>
<dbReference type="InterPro" id="IPR002930">
    <property type="entry name" value="GCV_H"/>
</dbReference>
<dbReference type="InterPro" id="IPR033753">
    <property type="entry name" value="GCV_H/Fam206"/>
</dbReference>
<dbReference type="InterPro" id="IPR017453">
    <property type="entry name" value="GCV_H_sub"/>
</dbReference>
<dbReference type="InterPro" id="IPR011053">
    <property type="entry name" value="Single_hybrid_motif"/>
</dbReference>
<dbReference type="NCBIfam" id="TIGR00527">
    <property type="entry name" value="gcvH"/>
    <property type="match status" value="1"/>
</dbReference>
<dbReference type="NCBIfam" id="NF002270">
    <property type="entry name" value="PRK01202.1"/>
    <property type="match status" value="1"/>
</dbReference>
<dbReference type="PANTHER" id="PTHR11715">
    <property type="entry name" value="GLYCINE CLEAVAGE SYSTEM H PROTEIN"/>
    <property type="match status" value="1"/>
</dbReference>
<dbReference type="PANTHER" id="PTHR11715:SF3">
    <property type="entry name" value="GLYCINE CLEAVAGE SYSTEM H PROTEIN-RELATED"/>
    <property type="match status" value="1"/>
</dbReference>
<dbReference type="Pfam" id="PF01597">
    <property type="entry name" value="GCV_H"/>
    <property type="match status" value="1"/>
</dbReference>
<dbReference type="SUPFAM" id="SSF51230">
    <property type="entry name" value="Single hybrid motif"/>
    <property type="match status" value="1"/>
</dbReference>
<dbReference type="PROSITE" id="PS50968">
    <property type="entry name" value="BIOTINYL_LIPOYL"/>
    <property type="match status" value="1"/>
</dbReference>
<dbReference type="PROSITE" id="PS00189">
    <property type="entry name" value="LIPOYL"/>
    <property type="match status" value="1"/>
</dbReference>
<keyword id="KW-0450">Lipoyl</keyword>